<dbReference type="EC" id="4.1.1.11" evidence="1"/>
<dbReference type="EMBL" id="CP000526">
    <property type="protein sequence ID" value="ABM50228.1"/>
    <property type="molecule type" value="Genomic_DNA"/>
</dbReference>
<dbReference type="RefSeq" id="WP_004191357.1">
    <property type="nucleotide sequence ID" value="NC_008785.1"/>
</dbReference>
<dbReference type="SMR" id="A1V5W9"/>
<dbReference type="GeneID" id="92978462"/>
<dbReference type="KEGG" id="bmv:BMASAVP1_A2313"/>
<dbReference type="HOGENOM" id="CLU_115305_2_1_4"/>
<dbReference type="UniPathway" id="UPA00028">
    <property type="reaction ID" value="UER00002"/>
</dbReference>
<dbReference type="GO" id="GO:0005829">
    <property type="term" value="C:cytosol"/>
    <property type="evidence" value="ECO:0007669"/>
    <property type="project" value="TreeGrafter"/>
</dbReference>
<dbReference type="GO" id="GO:0004068">
    <property type="term" value="F:aspartate 1-decarboxylase activity"/>
    <property type="evidence" value="ECO:0007669"/>
    <property type="project" value="UniProtKB-UniRule"/>
</dbReference>
<dbReference type="GO" id="GO:0006523">
    <property type="term" value="P:alanine biosynthetic process"/>
    <property type="evidence" value="ECO:0007669"/>
    <property type="project" value="InterPro"/>
</dbReference>
<dbReference type="GO" id="GO:0015940">
    <property type="term" value="P:pantothenate biosynthetic process"/>
    <property type="evidence" value="ECO:0007669"/>
    <property type="project" value="UniProtKB-UniRule"/>
</dbReference>
<dbReference type="CDD" id="cd06919">
    <property type="entry name" value="Asp_decarbox"/>
    <property type="match status" value="1"/>
</dbReference>
<dbReference type="Gene3D" id="2.40.40.20">
    <property type="match status" value="1"/>
</dbReference>
<dbReference type="HAMAP" id="MF_00446">
    <property type="entry name" value="PanD"/>
    <property type="match status" value="1"/>
</dbReference>
<dbReference type="InterPro" id="IPR009010">
    <property type="entry name" value="Asp_de-COase-like_dom_sf"/>
</dbReference>
<dbReference type="InterPro" id="IPR003190">
    <property type="entry name" value="Asp_decarbox"/>
</dbReference>
<dbReference type="NCBIfam" id="TIGR00223">
    <property type="entry name" value="panD"/>
    <property type="match status" value="1"/>
</dbReference>
<dbReference type="PANTHER" id="PTHR21012">
    <property type="entry name" value="ASPARTATE 1-DECARBOXYLASE"/>
    <property type="match status" value="1"/>
</dbReference>
<dbReference type="PANTHER" id="PTHR21012:SF0">
    <property type="entry name" value="ASPARTATE 1-DECARBOXYLASE"/>
    <property type="match status" value="1"/>
</dbReference>
<dbReference type="Pfam" id="PF02261">
    <property type="entry name" value="Asp_decarbox"/>
    <property type="match status" value="1"/>
</dbReference>
<dbReference type="PIRSF" id="PIRSF006246">
    <property type="entry name" value="Asp_decarbox"/>
    <property type="match status" value="1"/>
</dbReference>
<dbReference type="SUPFAM" id="SSF50692">
    <property type="entry name" value="ADC-like"/>
    <property type="match status" value="1"/>
</dbReference>
<reference key="1">
    <citation type="journal article" date="2010" name="Genome Biol. Evol.">
        <title>Continuing evolution of Burkholderia mallei through genome reduction and large-scale rearrangements.</title>
        <authorList>
            <person name="Losada L."/>
            <person name="Ronning C.M."/>
            <person name="DeShazer D."/>
            <person name="Woods D."/>
            <person name="Fedorova N."/>
            <person name="Kim H.S."/>
            <person name="Shabalina S.A."/>
            <person name="Pearson T.R."/>
            <person name="Brinkac L."/>
            <person name="Tan P."/>
            <person name="Nandi T."/>
            <person name="Crabtree J."/>
            <person name="Badger J."/>
            <person name="Beckstrom-Sternberg S."/>
            <person name="Saqib M."/>
            <person name="Schutzer S.E."/>
            <person name="Keim P."/>
            <person name="Nierman W.C."/>
        </authorList>
    </citation>
    <scope>NUCLEOTIDE SEQUENCE [LARGE SCALE GENOMIC DNA]</scope>
    <source>
        <strain>SAVP1</strain>
    </source>
</reference>
<keyword id="KW-0068">Autocatalytic cleavage</keyword>
<keyword id="KW-0963">Cytoplasm</keyword>
<keyword id="KW-0210">Decarboxylase</keyword>
<keyword id="KW-0456">Lyase</keyword>
<keyword id="KW-0566">Pantothenate biosynthesis</keyword>
<keyword id="KW-0670">Pyruvate</keyword>
<keyword id="KW-0704">Schiff base</keyword>
<keyword id="KW-0865">Zymogen</keyword>
<protein>
    <recommendedName>
        <fullName evidence="1">Aspartate 1-decarboxylase</fullName>
        <ecNumber evidence="1">4.1.1.11</ecNumber>
    </recommendedName>
    <alternativeName>
        <fullName evidence="1">Aspartate alpha-decarboxylase</fullName>
    </alternativeName>
    <component>
        <recommendedName>
            <fullName evidence="1">Aspartate 1-decarboxylase beta chain</fullName>
        </recommendedName>
    </component>
    <component>
        <recommendedName>
            <fullName evidence="1">Aspartate 1-decarboxylase alpha chain</fullName>
        </recommendedName>
    </component>
</protein>
<evidence type="ECO:0000255" key="1">
    <source>
        <dbReference type="HAMAP-Rule" id="MF_00446"/>
    </source>
</evidence>
<name>PAND_BURMS</name>
<gene>
    <name evidence="1" type="primary">panD</name>
    <name type="ordered locus">BMASAVP1_A2313</name>
</gene>
<accession>A1V5W9</accession>
<organism>
    <name type="scientific">Burkholderia mallei (strain SAVP1)</name>
    <dbReference type="NCBI Taxonomy" id="320388"/>
    <lineage>
        <taxon>Bacteria</taxon>
        <taxon>Pseudomonadati</taxon>
        <taxon>Pseudomonadota</taxon>
        <taxon>Betaproteobacteria</taxon>
        <taxon>Burkholderiales</taxon>
        <taxon>Burkholderiaceae</taxon>
        <taxon>Burkholderia</taxon>
        <taxon>pseudomallei group</taxon>
    </lineage>
</organism>
<comment type="function">
    <text evidence="1">Catalyzes the pyruvoyl-dependent decarboxylation of aspartate to produce beta-alanine.</text>
</comment>
<comment type="catalytic activity">
    <reaction evidence="1">
        <text>L-aspartate + H(+) = beta-alanine + CO2</text>
        <dbReference type="Rhea" id="RHEA:19497"/>
        <dbReference type="ChEBI" id="CHEBI:15378"/>
        <dbReference type="ChEBI" id="CHEBI:16526"/>
        <dbReference type="ChEBI" id="CHEBI:29991"/>
        <dbReference type="ChEBI" id="CHEBI:57966"/>
        <dbReference type="EC" id="4.1.1.11"/>
    </reaction>
</comment>
<comment type="cofactor">
    <cofactor evidence="1">
        <name>pyruvate</name>
        <dbReference type="ChEBI" id="CHEBI:15361"/>
    </cofactor>
    <text evidence="1">Binds 1 pyruvoyl group covalently per subunit.</text>
</comment>
<comment type="pathway">
    <text evidence="1">Cofactor biosynthesis; (R)-pantothenate biosynthesis; beta-alanine from L-aspartate: step 1/1.</text>
</comment>
<comment type="subunit">
    <text evidence="1">Heterooctamer of four alpha and four beta subunits.</text>
</comment>
<comment type="subcellular location">
    <subcellularLocation>
        <location evidence="1">Cytoplasm</location>
    </subcellularLocation>
</comment>
<comment type="PTM">
    <text evidence="1">Is synthesized initially as an inactive proenzyme, which is activated by self-cleavage at a specific serine bond to produce a beta-subunit with a hydroxyl group at its C-terminus and an alpha-subunit with a pyruvoyl group at its N-terminus.</text>
</comment>
<comment type="similarity">
    <text evidence="1">Belongs to the PanD family.</text>
</comment>
<proteinExistence type="inferred from homology"/>
<sequence>MQRHMLKSKIHRAAVTHCELHYEGSCAIDEDLLEAANIVENERIDIWNVNNGERFSTYAIKGERGSGMISLNGSAARRAQLGDLVIIAAFAMIDEQELKAGWKPDLVFVDEDNKIKGSRDHVPTQNWT</sequence>
<feature type="chain" id="PRO_1000026162" description="Aspartate 1-decarboxylase beta chain" evidence="1">
    <location>
        <begin position="1"/>
        <end position="24"/>
    </location>
</feature>
<feature type="chain" id="PRO_0000316053" description="Aspartate 1-decarboxylase alpha chain" evidence="1">
    <location>
        <begin position="25"/>
        <end position="128"/>
    </location>
</feature>
<feature type="active site" description="Schiff-base intermediate with substrate; via pyruvic acid" evidence="1">
    <location>
        <position position="25"/>
    </location>
</feature>
<feature type="active site" description="Proton donor" evidence="1">
    <location>
        <position position="58"/>
    </location>
</feature>
<feature type="binding site" evidence="1">
    <location>
        <position position="57"/>
    </location>
    <ligand>
        <name>substrate</name>
    </ligand>
</feature>
<feature type="binding site" evidence="1">
    <location>
        <begin position="73"/>
        <end position="75"/>
    </location>
    <ligand>
        <name>substrate</name>
    </ligand>
</feature>
<feature type="modified residue" description="Pyruvic acid (Ser)" evidence="1">
    <location>
        <position position="25"/>
    </location>
</feature>